<keyword id="KW-0167">Capsid protein</keyword>
<keyword id="KW-1139">Helical capsid protein</keyword>
<keyword id="KW-1035">Host cytoplasm</keyword>
<keyword id="KW-0597">Phosphoprotein</keyword>
<keyword id="KW-1185">Reference proteome</keyword>
<keyword id="KW-0687">Ribonucleoprotein</keyword>
<keyword id="KW-0694">RNA-binding</keyword>
<keyword id="KW-0543">Viral nucleoprotein</keyword>
<keyword id="KW-0946">Virion</keyword>
<gene>
    <name type="primary">N</name>
</gene>
<organismHost>
    <name type="scientific">Salmo</name>
    <dbReference type="NCBI Taxonomy" id="8028"/>
</organismHost>
<reference key="1">
    <citation type="journal article" date="1995" name="Virus Res.">
        <title>The complete genome structure and phylogenetic relationship of infectious hematopoietic necrosis virus.</title>
        <authorList>
            <person name="Morzunov S.P."/>
            <person name="Winton J.R."/>
            <person name="Nichol S.T."/>
        </authorList>
    </citation>
    <scope>NUCLEOTIDE SEQUENCE [GENOMIC RNA]</scope>
</reference>
<accession>Q82680</accession>
<protein>
    <recommendedName>
        <fullName>Nucleoprotein</fullName>
        <shortName>NP</shortName>
    </recommendedName>
    <alternativeName>
        <fullName>Nucleocapsid protein</fullName>
        <shortName>Protein N</shortName>
    </alternativeName>
</protein>
<feature type="chain" id="PRO_0000282894" description="Nucleoprotein">
    <location>
        <begin position="1"/>
        <end position="391"/>
    </location>
</feature>
<feature type="region of interest" description="Disordered" evidence="2">
    <location>
        <begin position="346"/>
        <end position="391"/>
    </location>
</feature>
<feature type="compositionally biased region" description="Acidic residues" evidence="2">
    <location>
        <begin position="368"/>
        <end position="391"/>
    </location>
</feature>
<name>NCAP_IHNVW</name>
<evidence type="ECO:0000250" key="1"/>
<evidence type="ECO:0000256" key="2">
    <source>
        <dbReference type="SAM" id="MobiDB-lite"/>
    </source>
</evidence>
<evidence type="ECO:0000305" key="3"/>
<organism>
    <name type="scientific">Infectious hematopoietic necrosis virus (strain WRAC)</name>
    <name type="common">IHNV</name>
    <dbReference type="NCBI Taxonomy" id="429314"/>
    <lineage>
        <taxon>Viruses</taxon>
        <taxon>Riboviria</taxon>
        <taxon>Orthornavirae</taxon>
        <taxon>Negarnaviricota</taxon>
        <taxon>Haploviricotina</taxon>
        <taxon>Monjiviricetes</taxon>
        <taxon>Mononegavirales</taxon>
        <taxon>Rhabdoviridae</taxon>
        <taxon>Gammarhabdovirinae</taxon>
        <taxon>Novirhabdovirus</taxon>
        <taxon>Novirhabdovirus salmonid</taxon>
    </lineage>
</organism>
<proteinExistence type="inferred from homology"/>
<comment type="function">
    <text evidence="1">Encapsidates the genome, protecting it from nucleases. If expressed without protein P it binds non-specifically RNA and therefore can bind it's own mRNA. Interaction with protein P abolishes any non-specific RNA binding, and prevents phosphorylation. The soluble N-P complex encapsidates specifically the genomic RNA, with protein N protecting the genome like a pearl necklace. The encapsidated genomic RNA is termed the nucleocapsid (NC) and serves as template for viral transcription and replication. Protein N binds protein P in the NC through a different interaction, and can be phosphorylated. Subsequent viral replication is dependent on intracellular concentration of newly synthesized protein N. During replication, encapsidation by protein N is coupled to RNA synthesis and all replicative products are resistant to nucleases (By similarity).</text>
</comment>
<comment type="subunit">
    <text evidence="1">Homomultimerizes to form the nucleocapsid. Binds to viral genomic RNA (By similarity).</text>
</comment>
<comment type="subcellular location">
    <subcellularLocation>
        <location>Virion</location>
    </subcellularLocation>
    <subcellularLocation>
        <location evidence="1">Host cytoplasm</location>
    </subcellularLocation>
</comment>
<comment type="similarity">
    <text evidence="3">Belongs to the novirhabdovirus nucleocapsid protein family.</text>
</comment>
<dbReference type="EMBL" id="L40883">
    <property type="protein sequence ID" value="AAC42150.1"/>
    <property type="molecule type" value="Genomic_RNA"/>
</dbReference>
<dbReference type="KEGG" id="vg:1489845"/>
<dbReference type="Proteomes" id="UP000007212">
    <property type="component" value="Segment"/>
</dbReference>
<dbReference type="GO" id="GO:0019029">
    <property type="term" value="C:helical viral capsid"/>
    <property type="evidence" value="ECO:0007669"/>
    <property type="project" value="UniProtKB-KW"/>
</dbReference>
<dbReference type="GO" id="GO:0030430">
    <property type="term" value="C:host cell cytoplasm"/>
    <property type="evidence" value="ECO:0007669"/>
    <property type="project" value="UniProtKB-SubCell"/>
</dbReference>
<dbReference type="GO" id="GO:1990904">
    <property type="term" value="C:ribonucleoprotein complex"/>
    <property type="evidence" value="ECO:0007669"/>
    <property type="project" value="UniProtKB-KW"/>
</dbReference>
<dbReference type="GO" id="GO:0019013">
    <property type="term" value="C:viral nucleocapsid"/>
    <property type="evidence" value="ECO:0007669"/>
    <property type="project" value="UniProtKB-KW"/>
</dbReference>
<dbReference type="GO" id="GO:0003723">
    <property type="term" value="F:RNA binding"/>
    <property type="evidence" value="ECO:0007669"/>
    <property type="project" value="UniProtKB-KW"/>
</dbReference>
<dbReference type="InterPro" id="IPR004902">
    <property type="entry name" value="Rhabdo_ncap_2"/>
</dbReference>
<dbReference type="Pfam" id="PF03216">
    <property type="entry name" value="Rhabdo_ncap_2"/>
    <property type="match status" value="1"/>
</dbReference>
<sequence length="391" mass="42208">MTSALRETFTGLRDIKGGVLEDPETEYRPSTITLPLFFSKTDLDLEMIKRAVSQVGGEGTRKALSLLCAFVIAETVPSEAGTVAELLEALGFVLESLDTGAPPDATFADPNNKLAETIVKENVLEVVTGLLFTCALLTKYDVDKMATYCQNKLERLATSQGIGELVNFNANRGVLAKIGAVLRPGQKLTKAIYGIILINLSDPAIAARAKALCAMRLSGTGMTMVGLFNQAAKNLGALPADLLEDLCMKSVVESARRIVRLMRIVAEAPGVAAKYGVMMSRMLGEGYFKAYGINENARITCILMNINDRYDDGTSRGLTGIKVSDPFRKLAREIARLLVLKYDGDGSTGEGASELIRRAEMASRGPDMGEEEEEDEEDDDSSEPGDSDSFH</sequence>